<reference key="1">
    <citation type="journal article" date="2005" name="Nature">
        <title>Sequencing of Aspergillus nidulans and comparative analysis with A. fumigatus and A. oryzae.</title>
        <authorList>
            <person name="Galagan J.E."/>
            <person name="Calvo S.E."/>
            <person name="Cuomo C."/>
            <person name="Ma L.-J."/>
            <person name="Wortman J.R."/>
            <person name="Batzoglou S."/>
            <person name="Lee S.-I."/>
            <person name="Bastuerkmen M."/>
            <person name="Spevak C.C."/>
            <person name="Clutterbuck J."/>
            <person name="Kapitonov V."/>
            <person name="Jurka J."/>
            <person name="Scazzocchio C."/>
            <person name="Farman M.L."/>
            <person name="Butler J."/>
            <person name="Purcell S."/>
            <person name="Harris S."/>
            <person name="Braus G.H."/>
            <person name="Draht O."/>
            <person name="Busch S."/>
            <person name="D'Enfert C."/>
            <person name="Bouchier C."/>
            <person name="Goldman G.H."/>
            <person name="Bell-Pedersen D."/>
            <person name="Griffiths-Jones S."/>
            <person name="Doonan J.H."/>
            <person name="Yu J."/>
            <person name="Vienken K."/>
            <person name="Pain A."/>
            <person name="Freitag M."/>
            <person name="Selker E.U."/>
            <person name="Archer D.B."/>
            <person name="Penalva M.A."/>
            <person name="Oakley B.R."/>
            <person name="Momany M."/>
            <person name="Tanaka T."/>
            <person name="Kumagai T."/>
            <person name="Asai K."/>
            <person name="Machida M."/>
            <person name="Nierman W.C."/>
            <person name="Denning D.W."/>
            <person name="Caddick M.X."/>
            <person name="Hynes M."/>
            <person name="Paoletti M."/>
            <person name="Fischer R."/>
            <person name="Miller B.L."/>
            <person name="Dyer P.S."/>
            <person name="Sachs M.S."/>
            <person name="Osmani S.A."/>
            <person name="Birren B.W."/>
        </authorList>
    </citation>
    <scope>NUCLEOTIDE SEQUENCE [LARGE SCALE GENOMIC DNA]</scope>
    <source>
        <strain>FGSC A4 / ATCC 38163 / CBS 112.46 / NRRL 194 / M139</strain>
    </source>
</reference>
<reference key="2">
    <citation type="journal article" date="2009" name="Fungal Genet. Biol.">
        <title>The 2008 update of the Aspergillus nidulans genome annotation: a community effort.</title>
        <authorList>
            <person name="Wortman J.R."/>
            <person name="Gilsenan J.M."/>
            <person name="Joardar V."/>
            <person name="Deegan J."/>
            <person name="Clutterbuck J."/>
            <person name="Andersen M.R."/>
            <person name="Archer D."/>
            <person name="Bencina M."/>
            <person name="Braus G."/>
            <person name="Coutinho P."/>
            <person name="von Dohren H."/>
            <person name="Doonan J."/>
            <person name="Driessen A.J."/>
            <person name="Durek P."/>
            <person name="Espeso E."/>
            <person name="Fekete E."/>
            <person name="Flipphi M."/>
            <person name="Estrada C.G."/>
            <person name="Geysens S."/>
            <person name="Goldman G."/>
            <person name="de Groot P.W."/>
            <person name="Hansen K."/>
            <person name="Harris S.D."/>
            <person name="Heinekamp T."/>
            <person name="Helmstaedt K."/>
            <person name="Henrissat B."/>
            <person name="Hofmann G."/>
            <person name="Homan T."/>
            <person name="Horio T."/>
            <person name="Horiuchi H."/>
            <person name="James S."/>
            <person name="Jones M."/>
            <person name="Karaffa L."/>
            <person name="Karanyi Z."/>
            <person name="Kato M."/>
            <person name="Keller N."/>
            <person name="Kelly D.E."/>
            <person name="Kiel J.A."/>
            <person name="Kim J.M."/>
            <person name="van der Klei I.J."/>
            <person name="Klis F.M."/>
            <person name="Kovalchuk A."/>
            <person name="Krasevec N."/>
            <person name="Kubicek C.P."/>
            <person name="Liu B."/>
            <person name="Maccabe A."/>
            <person name="Meyer V."/>
            <person name="Mirabito P."/>
            <person name="Miskei M."/>
            <person name="Mos M."/>
            <person name="Mullins J."/>
            <person name="Nelson D.R."/>
            <person name="Nielsen J."/>
            <person name="Oakley B.R."/>
            <person name="Osmani S.A."/>
            <person name="Pakula T."/>
            <person name="Paszewski A."/>
            <person name="Paulsen I."/>
            <person name="Pilsyk S."/>
            <person name="Pocsi I."/>
            <person name="Punt P.J."/>
            <person name="Ram A.F."/>
            <person name="Ren Q."/>
            <person name="Robellet X."/>
            <person name="Robson G."/>
            <person name="Seiboth B."/>
            <person name="van Solingen P."/>
            <person name="Specht T."/>
            <person name="Sun J."/>
            <person name="Taheri-Talesh N."/>
            <person name="Takeshita N."/>
            <person name="Ussery D."/>
            <person name="vanKuyk P.A."/>
            <person name="Visser H."/>
            <person name="van de Vondervoort P.J."/>
            <person name="de Vries R.P."/>
            <person name="Walton J."/>
            <person name="Xiang X."/>
            <person name="Xiong Y."/>
            <person name="Zeng A.P."/>
            <person name="Brandt B.W."/>
            <person name="Cornell M.J."/>
            <person name="van den Hondel C.A."/>
            <person name="Visser J."/>
            <person name="Oliver S.G."/>
            <person name="Turner G."/>
        </authorList>
    </citation>
    <scope>GENOME REANNOTATION</scope>
    <source>
        <strain>FGSC A4 / ATCC 38163 / CBS 112.46 / NRRL 194 / M139</strain>
    </source>
</reference>
<reference key="3">
    <citation type="journal article" date="2007" name="Fungal Genet. Biol.">
        <title>Proteome map of Aspergillus nidulans during osmoadaptation.</title>
        <authorList>
            <person name="Kim Y."/>
            <person name="Nandakumar M.P."/>
            <person name="Marten M.R."/>
        </authorList>
    </citation>
    <scope>INDUCTION</scope>
    <scope>IDENTIFICATION BY MASS SPECTROMETRY</scope>
</reference>
<evidence type="ECO:0000269" key="1">
    <source>
    </source>
</evidence>
<gene>
    <name type="ORF">AN7484</name>
</gene>
<feature type="chain" id="PRO_0000348271" description="Uncharacterized protein AN7484">
    <location>
        <begin position="1"/>
        <end position="200"/>
    </location>
</feature>
<protein>
    <recommendedName>
        <fullName>Uncharacterized protein AN7484</fullName>
    </recommendedName>
</protein>
<name>Y7484_EMENI</name>
<organism>
    <name type="scientific">Emericella nidulans (strain FGSC A4 / ATCC 38163 / CBS 112.46 / NRRL 194 / M139)</name>
    <name type="common">Aspergillus nidulans</name>
    <dbReference type="NCBI Taxonomy" id="227321"/>
    <lineage>
        <taxon>Eukaryota</taxon>
        <taxon>Fungi</taxon>
        <taxon>Dikarya</taxon>
        <taxon>Ascomycota</taxon>
        <taxon>Pezizomycotina</taxon>
        <taxon>Eurotiomycetes</taxon>
        <taxon>Eurotiomycetidae</taxon>
        <taxon>Eurotiales</taxon>
        <taxon>Aspergillaceae</taxon>
        <taxon>Aspergillus</taxon>
        <taxon>Aspergillus subgen. Nidulantes</taxon>
    </lineage>
</organism>
<proteinExistence type="evidence at protein level"/>
<keyword id="KW-1185">Reference proteome</keyword>
<keyword id="KW-0346">Stress response</keyword>
<accession>Q5AW46</accession>
<accession>C8VBG1</accession>
<comment type="function">
    <text>Involved in osmoadaptation.</text>
</comment>
<comment type="induction">
    <text evidence="1">Up-regulated when grown with elevated levels of potassium chloride.</text>
</comment>
<dbReference type="EMBL" id="AACD01000129">
    <property type="protein sequence ID" value="EAA62064.1"/>
    <property type="molecule type" value="Genomic_DNA"/>
</dbReference>
<dbReference type="EMBL" id="BN001304">
    <property type="protein sequence ID" value="CBF79470.1"/>
    <property type="molecule type" value="Genomic_DNA"/>
</dbReference>
<dbReference type="RefSeq" id="XP_680753.1">
    <property type="nucleotide sequence ID" value="XM_675661.1"/>
</dbReference>
<dbReference type="SMR" id="Q5AW46"/>
<dbReference type="STRING" id="227321.Q5AW46"/>
<dbReference type="EnsemblFungi" id="CBF79470">
    <property type="protein sequence ID" value="CBF79470"/>
    <property type="gene ID" value="ANIA_07484"/>
</dbReference>
<dbReference type="KEGG" id="ani:ANIA_07484"/>
<dbReference type="VEuPathDB" id="FungiDB:AN7484"/>
<dbReference type="eggNOG" id="ENOG502S8JK">
    <property type="taxonomic scope" value="Eukaryota"/>
</dbReference>
<dbReference type="HOGENOM" id="CLU_077442_2_0_1"/>
<dbReference type="InParanoid" id="Q5AW46"/>
<dbReference type="OMA" id="DVWSKPP"/>
<dbReference type="OrthoDB" id="42525at2759"/>
<dbReference type="Proteomes" id="UP000000560">
    <property type="component" value="Chromosome IV"/>
</dbReference>
<dbReference type="GO" id="GO:0071470">
    <property type="term" value="P:cellular response to osmotic stress"/>
    <property type="evidence" value="ECO:0000270"/>
    <property type="project" value="AspGD"/>
</dbReference>
<dbReference type="Gene3D" id="2.60.120.200">
    <property type="match status" value="1"/>
</dbReference>
<dbReference type="InterPro" id="IPR013320">
    <property type="entry name" value="ConA-like_dom_sf"/>
</dbReference>
<dbReference type="InterPro" id="IPR009784">
    <property type="entry name" value="DUF1349"/>
</dbReference>
<dbReference type="PANTHER" id="PTHR35332">
    <property type="entry name" value="REGULATION OF ENOLASE PROTEIN 1"/>
    <property type="match status" value="1"/>
</dbReference>
<dbReference type="PANTHER" id="PTHR35332:SF2">
    <property type="entry name" value="REGULATION OF ENOLASE PROTEIN 1"/>
    <property type="match status" value="1"/>
</dbReference>
<dbReference type="Pfam" id="PF07081">
    <property type="entry name" value="DUF1349"/>
    <property type="match status" value="1"/>
</dbReference>
<dbReference type="SUPFAM" id="SSF49899">
    <property type="entry name" value="Concanavalin A-like lectins/glucanases"/>
    <property type="match status" value="1"/>
</dbReference>
<sequence length="200" mass="22114">MAGFASANLLERVPEDEVLPAEFTVKAPPETDIWAKPPSTERFNAPILYKSIPLDTFKRARVAFSANWSQKYDQGGLIIVLNGNSGDRKWVKTGIEFTHDKPHLSTVAKDRWADWSLLPVPSGGTGATLEVVREPDDSLWIYLIQGVQKSPIREVTWVFAEEDVRDAWIGVYAARPSSAGGDLVVNFASLIIEVTDSTTK</sequence>